<sequence>MKSAEIREAFLGFFEEQGHTRVPSSSLIPGNDPTLLFTNAGMNQFKDCFLGQEKRAYTRAVTSQKCVRAGGKHNDLENVGYTARHHTFFEMLGNFSFGDYFKRDAITYAWTFLTSEKWLNLPKEKLWVTVYATDDEAYDIWTKEIGVPAERMVRIGDNKGAPYASDNFWTMGDTGPCGPCSEIFFDHGADIWGGPPGSPEEDGDRYIEIWNNVFMQFNRTADGVLHPLPAPSVDTGMGLERVSAVLQHVHSNYEIDLFQSLLTASANAIGCSNDNQASLKVVADHIRSCGFLIADGVLPSSEGRGYVLRRIIRRACRHGNKLGAKGSFFYQIVAALVAEMGSAFPELVQQQSHIERVLRGEEEQFAKTLEQGLKIIEQDLAELKGTVVPGEIVFKLYDTYGFPMDLTGDIARERNLTLDEEGFEREMEAQRVRARSASSFGMDYNSLVKVDVATQFTGYSATTGSASVVALYKDGQSVTHLNAGEEGVVILDTTPFYAESGGQIGDSGFLLAGDARFDVSDTTKTGGAFLHHGVVASGSLSVGVQVETQVADEVRDATKLNHSATHLLHAALRQVLGEHVQQKGSLVDSQRLRFDFSHFESIKPEQLRALEDIVNAEIRKNTPVVTEETDIDTAKKKGAMALFGEKYGDSVRVLSMGGEFSVELCGGIHASRTGDISLFKIVSEGGVAAGVRRIEAVTGAAALAWLNSAEDQLKEAATLVKGNRDNLLDKLTAVLERNRLLEKQLEQLQAKAASAAGDDLSSAALDVKGVKVLATRLDGQDGKALLALVDQLKNKLGRAVILLGSVHEDKVVLVAGVTKDLTGQLKAGDLMKQAATAVGGKGGGRPDMAQGGGVDATALDSALALAVPFVEQGI</sequence>
<name>SYA_PSESM</name>
<reference key="1">
    <citation type="journal article" date="2003" name="Proc. Natl. Acad. Sci. U.S.A.">
        <title>The complete genome sequence of the Arabidopsis and tomato pathogen Pseudomonas syringae pv. tomato DC3000.</title>
        <authorList>
            <person name="Buell C.R."/>
            <person name="Joardar V."/>
            <person name="Lindeberg M."/>
            <person name="Selengut J."/>
            <person name="Paulsen I.T."/>
            <person name="Gwinn M.L."/>
            <person name="Dodson R.J."/>
            <person name="DeBoy R.T."/>
            <person name="Durkin A.S."/>
            <person name="Kolonay J.F."/>
            <person name="Madupu R."/>
            <person name="Daugherty S.C."/>
            <person name="Brinkac L.M."/>
            <person name="Beanan M.J."/>
            <person name="Haft D.H."/>
            <person name="Nelson W.C."/>
            <person name="Davidsen T.M."/>
            <person name="Zafar N."/>
            <person name="Zhou L."/>
            <person name="Liu J."/>
            <person name="Yuan Q."/>
            <person name="Khouri H.M."/>
            <person name="Fedorova N.B."/>
            <person name="Tran B."/>
            <person name="Russell D."/>
            <person name="Berry K.J."/>
            <person name="Utterback T.R."/>
            <person name="Van Aken S.E."/>
            <person name="Feldblyum T.V."/>
            <person name="D'Ascenzo M."/>
            <person name="Deng W.-L."/>
            <person name="Ramos A.R."/>
            <person name="Alfano J.R."/>
            <person name="Cartinhour S."/>
            <person name="Chatterjee A.K."/>
            <person name="Delaney T.P."/>
            <person name="Lazarowitz S.G."/>
            <person name="Martin G.B."/>
            <person name="Schneider D.J."/>
            <person name="Tang X."/>
            <person name="Bender C.L."/>
            <person name="White O."/>
            <person name="Fraser C.M."/>
            <person name="Collmer A."/>
        </authorList>
    </citation>
    <scope>NUCLEOTIDE SEQUENCE [LARGE SCALE GENOMIC DNA]</scope>
    <source>
        <strain>ATCC BAA-871 / DC3000</strain>
    </source>
</reference>
<accession>Q885J0</accession>
<organism>
    <name type="scientific">Pseudomonas syringae pv. tomato (strain ATCC BAA-871 / DC3000)</name>
    <dbReference type="NCBI Taxonomy" id="223283"/>
    <lineage>
        <taxon>Bacteria</taxon>
        <taxon>Pseudomonadati</taxon>
        <taxon>Pseudomonadota</taxon>
        <taxon>Gammaproteobacteria</taxon>
        <taxon>Pseudomonadales</taxon>
        <taxon>Pseudomonadaceae</taxon>
        <taxon>Pseudomonas</taxon>
    </lineage>
</organism>
<gene>
    <name evidence="1" type="primary">alaS</name>
    <name type="ordered locus">PSPTO_1842</name>
</gene>
<keyword id="KW-0030">Aminoacyl-tRNA synthetase</keyword>
<keyword id="KW-0067">ATP-binding</keyword>
<keyword id="KW-0963">Cytoplasm</keyword>
<keyword id="KW-0436">Ligase</keyword>
<keyword id="KW-0479">Metal-binding</keyword>
<keyword id="KW-0547">Nucleotide-binding</keyword>
<keyword id="KW-0648">Protein biosynthesis</keyword>
<keyword id="KW-1185">Reference proteome</keyword>
<keyword id="KW-0694">RNA-binding</keyword>
<keyword id="KW-0820">tRNA-binding</keyword>
<keyword id="KW-0862">Zinc</keyword>
<comment type="function">
    <text evidence="1">Catalyzes the attachment of alanine to tRNA(Ala) in a two-step reaction: alanine is first activated by ATP to form Ala-AMP and then transferred to the acceptor end of tRNA(Ala). Also edits incorrectly charged Ser-tRNA(Ala) and Gly-tRNA(Ala) via its editing domain.</text>
</comment>
<comment type="catalytic activity">
    <reaction evidence="1">
        <text>tRNA(Ala) + L-alanine + ATP = L-alanyl-tRNA(Ala) + AMP + diphosphate</text>
        <dbReference type="Rhea" id="RHEA:12540"/>
        <dbReference type="Rhea" id="RHEA-COMP:9657"/>
        <dbReference type="Rhea" id="RHEA-COMP:9923"/>
        <dbReference type="ChEBI" id="CHEBI:30616"/>
        <dbReference type="ChEBI" id="CHEBI:33019"/>
        <dbReference type="ChEBI" id="CHEBI:57972"/>
        <dbReference type="ChEBI" id="CHEBI:78442"/>
        <dbReference type="ChEBI" id="CHEBI:78497"/>
        <dbReference type="ChEBI" id="CHEBI:456215"/>
        <dbReference type="EC" id="6.1.1.7"/>
    </reaction>
</comment>
<comment type="cofactor">
    <cofactor evidence="1">
        <name>Zn(2+)</name>
        <dbReference type="ChEBI" id="CHEBI:29105"/>
    </cofactor>
    <text evidence="1">Binds 1 zinc ion per subunit.</text>
</comment>
<comment type="subcellular location">
    <subcellularLocation>
        <location evidence="1">Cytoplasm</location>
    </subcellularLocation>
</comment>
<comment type="domain">
    <text evidence="1">Consists of three domains; the N-terminal catalytic domain, the editing domain and the C-terminal C-Ala domain. The editing domain removes incorrectly charged amino acids, while the C-Ala domain, along with tRNA(Ala), serves as a bridge to cooperatively bring together the editing and aminoacylation centers thus stimulating deacylation of misacylated tRNAs.</text>
</comment>
<comment type="similarity">
    <text evidence="1">Belongs to the class-II aminoacyl-tRNA synthetase family.</text>
</comment>
<proteinExistence type="inferred from homology"/>
<feature type="chain" id="PRO_0000075181" description="Alanine--tRNA ligase">
    <location>
        <begin position="1"/>
        <end position="874"/>
    </location>
</feature>
<feature type="binding site" evidence="1">
    <location>
        <position position="562"/>
    </location>
    <ligand>
        <name>Zn(2+)</name>
        <dbReference type="ChEBI" id="CHEBI:29105"/>
    </ligand>
</feature>
<feature type="binding site" evidence="1">
    <location>
        <position position="566"/>
    </location>
    <ligand>
        <name>Zn(2+)</name>
        <dbReference type="ChEBI" id="CHEBI:29105"/>
    </ligand>
</feature>
<feature type="binding site" evidence="1">
    <location>
        <position position="665"/>
    </location>
    <ligand>
        <name>Zn(2+)</name>
        <dbReference type="ChEBI" id="CHEBI:29105"/>
    </ligand>
</feature>
<feature type="binding site" evidence="1">
    <location>
        <position position="669"/>
    </location>
    <ligand>
        <name>Zn(2+)</name>
        <dbReference type="ChEBI" id="CHEBI:29105"/>
    </ligand>
</feature>
<evidence type="ECO:0000255" key="1">
    <source>
        <dbReference type="HAMAP-Rule" id="MF_00036"/>
    </source>
</evidence>
<protein>
    <recommendedName>
        <fullName evidence="1">Alanine--tRNA ligase</fullName>
        <ecNumber evidence="1">6.1.1.7</ecNumber>
    </recommendedName>
    <alternativeName>
        <fullName evidence="1">Alanyl-tRNA synthetase</fullName>
        <shortName evidence="1">AlaRS</shortName>
    </alternativeName>
</protein>
<dbReference type="EC" id="6.1.1.7" evidence="1"/>
<dbReference type="EMBL" id="AE016853">
    <property type="protein sequence ID" value="AAO55361.1"/>
    <property type="molecule type" value="Genomic_DNA"/>
</dbReference>
<dbReference type="RefSeq" id="NP_791666.1">
    <property type="nucleotide sequence ID" value="NC_004578.1"/>
</dbReference>
<dbReference type="RefSeq" id="WP_011103723.1">
    <property type="nucleotide sequence ID" value="NC_004578.1"/>
</dbReference>
<dbReference type="SMR" id="Q885J0"/>
<dbReference type="STRING" id="223283.PSPTO_1842"/>
<dbReference type="GeneID" id="1183483"/>
<dbReference type="KEGG" id="pst:PSPTO_1842"/>
<dbReference type="PATRIC" id="fig|223283.9.peg.1871"/>
<dbReference type="eggNOG" id="COG0013">
    <property type="taxonomic scope" value="Bacteria"/>
</dbReference>
<dbReference type="HOGENOM" id="CLU_004485_1_1_6"/>
<dbReference type="OrthoDB" id="9803884at2"/>
<dbReference type="PhylomeDB" id="Q885J0"/>
<dbReference type="Proteomes" id="UP000002515">
    <property type="component" value="Chromosome"/>
</dbReference>
<dbReference type="GO" id="GO:0005829">
    <property type="term" value="C:cytosol"/>
    <property type="evidence" value="ECO:0007669"/>
    <property type="project" value="TreeGrafter"/>
</dbReference>
<dbReference type="GO" id="GO:0004813">
    <property type="term" value="F:alanine-tRNA ligase activity"/>
    <property type="evidence" value="ECO:0007669"/>
    <property type="project" value="UniProtKB-UniRule"/>
</dbReference>
<dbReference type="GO" id="GO:0002161">
    <property type="term" value="F:aminoacyl-tRNA deacylase activity"/>
    <property type="evidence" value="ECO:0007669"/>
    <property type="project" value="TreeGrafter"/>
</dbReference>
<dbReference type="GO" id="GO:0005524">
    <property type="term" value="F:ATP binding"/>
    <property type="evidence" value="ECO:0007669"/>
    <property type="project" value="UniProtKB-UniRule"/>
</dbReference>
<dbReference type="GO" id="GO:0000049">
    <property type="term" value="F:tRNA binding"/>
    <property type="evidence" value="ECO:0007669"/>
    <property type="project" value="UniProtKB-KW"/>
</dbReference>
<dbReference type="GO" id="GO:0008270">
    <property type="term" value="F:zinc ion binding"/>
    <property type="evidence" value="ECO:0007669"/>
    <property type="project" value="UniProtKB-UniRule"/>
</dbReference>
<dbReference type="GO" id="GO:0006419">
    <property type="term" value="P:alanyl-tRNA aminoacylation"/>
    <property type="evidence" value="ECO:0007669"/>
    <property type="project" value="UniProtKB-UniRule"/>
</dbReference>
<dbReference type="GO" id="GO:0045892">
    <property type="term" value="P:negative regulation of DNA-templated transcription"/>
    <property type="evidence" value="ECO:0007669"/>
    <property type="project" value="TreeGrafter"/>
</dbReference>
<dbReference type="CDD" id="cd00673">
    <property type="entry name" value="AlaRS_core"/>
    <property type="match status" value="1"/>
</dbReference>
<dbReference type="FunFam" id="2.40.30.130:FF:000001">
    <property type="entry name" value="Alanine--tRNA ligase"/>
    <property type="match status" value="1"/>
</dbReference>
<dbReference type="FunFam" id="3.10.310.40:FF:000001">
    <property type="entry name" value="Alanine--tRNA ligase"/>
    <property type="match status" value="1"/>
</dbReference>
<dbReference type="FunFam" id="3.30.54.20:FF:000001">
    <property type="entry name" value="Alanine--tRNA ligase"/>
    <property type="match status" value="1"/>
</dbReference>
<dbReference type="FunFam" id="3.30.930.10:FF:000004">
    <property type="entry name" value="Alanine--tRNA ligase"/>
    <property type="match status" value="1"/>
</dbReference>
<dbReference type="FunFam" id="3.30.980.10:FF:000004">
    <property type="entry name" value="Alanine--tRNA ligase, cytoplasmic"/>
    <property type="match status" value="1"/>
</dbReference>
<dbReference type="Gene3D" id="2.40.30.130">
    <property type="match status" value="1"/>
</dbReference>
<dbReference type="Gene3D" id="3.10.310.40">
    <property type="match status" value="1"/>
</dbReference>
<dbReference type="Gene3D" id="3.30.54.20">
    <property type="match status" value="1"/>
</dbReference>
<dbReference type="Gene3D" id="6.10.250.550">
    <property type="match status" value="1"/>
</dbReference>
<dbReference type="Gene3D" id="3.30.930.10">
    <property type="entry name" value="Bira Bifunctional Protein, Domain 2"/>
    <property type="match status" value="1"/>
</dbReference>
<dbReference type="Gene3D" id="3.30.980.10">
    <property type="entry name" value="Threonyl-trna Synthetase, Chain A, domain 2"/>
    <property type="match status" value="1"/>
</dbReference>
<dbReference type="HAMAP" id="MF_00036_B">
    <property type="entry name" value="Ala_tRNA_synth_B"/>
    <property type="match status" value="1"/>
</dbReference>
<dbReference type="InterPro" id="IPR045864">
    <property type="entry name" value="aa-tRNA-synth_II/BPL/LPL"/>
</dbReference>
<dbReference type="InterPro" id="IPR002318">
    <property type="entry name" value="Ala-tRNA-lgiase_IIc"/>
</dbReference>
<dbReference type="InterPro" id="IPR018162">
    <property type="entry name" value="Ala-tRNA-ligase_IIc_anticod-bd"/>
</dbReference>
<dbReference type="InterPro" id="IPR018165">
    <property type="entry name" value="Ala-tRNA-synth_IIc_core"/>
</dbReference>
<dbReference type="InterPro" id="IPR018164">
    <property type="entry name" value="Ala-tRNA-synth_IIc_N"/>
</dbReference>
<dbReference type="InterPro" id="IPR050058">
    <property type="entry name" value="Ala-tRNA_ligase"/>
</dbReference>
<dbReference type="InterPro" id="IPR023033">
    <property type="entry name" value="Ala_tRNA_ligase_euk/bac"/>
</dbReference>
<dbReference type="InterPro" id="IPR003156">
    <property type="entry name" value="DHHA1_dom"/>
</dbReference>
<dbReference type="InterPro" id="IPR018163">
    <property type="entry name" value="Thr/Ala-tRNA-synth_IIc_edit"/>
</dbReference>
<dbReference type="InterPro" id="IPR009000">
    <property type="entry name" value="Transl_B-barrel_sf"/>
</dbReference>
<dbReference type="InterPro" id="IPR012947">
    <property type="entry name" value="tRNA_SAD"/>
</dbReference>
<dbReference type="NCBIfam" id="TIGR00344">
    <property type="entry name" value="alaS"/>
    <property type="match status" value="1"/>
</dbReference>
<dbReference type="PANTHER" id="PTHR11777:SF9">
    <property type="entry name" value="ALANINE--TRNA LIGASE, CYTOPLASMIC"/>
    <property type="match status" value="1"/>
</dbReference>
<dbReference type="PANTHER" id="PTHR11777">
    <property type="entry name" value="ALANYL-TRNA SYNTHETASE"/>
    <property type="match status" value="1"/>
</dbReference>
<dbReference type="Pfam" id="PF02272">
    <property type="entry name" value="DHHA1"/>
    <property type="match status" value="1"/>
</dbReference>
<dbReference type="Pfam" id="PF01411">
    <property type="entry name" value="tRNA-synt_2c"/>
    <property type="match status" value="1"/>
</dbReference>
<dbReference type="Pfam" id="PF07973">
    <property type="entry name" value="tRNA_SAD"/>
    <property type="match status" value="1"/>
</dbReference>
<dbReference type="PRINTS" id="PR00980">
    <property type="entry name" value="TRNASYNTHALA"/>
</dbReference>
<dbReference type="SMART" id="SM00863">
    <property type="entry name" value="tRNA_SAD"/>
    <property type="match status" value="1"/>
</dbReference>
<dbReference type="SUPFAM" id="SSF55681">
    <property type="entry name" value="Class II aaRS and biotin synthetases"/>
    <property type="match status" value="1"/>
</dbReference>
<dbReference type="SUPFAM" id="SSF101353">
    <property type="entry name" value="Putative anticodon-binding domain of alanyl-tRNA synthetase (AlaRS)"/>
    <property type="match status" value="1"/>
</dbReference>
<dbReference type="SUPFAM" id="SSF55186">
    <property type="entry name" value="ThrRS/AlaRS common domain"/>
    <property type="match status" value="1"/>
</dbReference>
<dbReference type="SUPFAM" id="SSF50447">
    <property type="entry name" value="Translation proteins"/>
    <property type="match status" value="1"/>
</dbReference>
<dbReference type="PROSITE" id="PS50860">
    <property type="entry name" value="AA_TRNA_LIGASE_II_ALA"/>
    <property type="match status" value="1"/>
</dbReference>